<keyword id="KW-0064">Aspartyl protease</keyword>
<keyword id="KW-1003">Cell membrane</keyword>
<keyword id="KW-0378">Hydrolase</keyword>
<keyword id="KW-0472">Membrane</keyword>
<keyword id="KW-0645">Protease</keyword>
<keyword id="KW-0812">Transmembrane</keyword>
<keyword id="KW-1133">Transmembrane helix</keyword>
<evidence type="ECO:0000255" key="1">
    <source>
        <dbReference type="HAMAP-Rule" id="MF_00161"/>
    </source>
</evidence>
<sequence length="152" mass="17272">MKKRLFVLSLILLVALDQLSKFWIVSHIALGEVKPFIPGIVSLTYLQNNGAAFSILQDQQWFFVVITVLVIGYAIYYLATHPHLNIWKQLALLLIISGGIGNFIDRLRLAYVIDMVHLDFVDFAIFNVADSYLTVGVILLVICLWKEEDYGN</sequence>
<reference key="1">
    <citation type="journal article" date="2006" name="Proc. Natl. Acad. Sci. U.S.A.">
        <title>Molecular genetic anatomy of inter- and intraserotype variation in the human bacterial pathogen group A Streptococcus.</title>
        <authorList>
            <person name="Beres S.B."/>
            <person name="Richter E.W."/>
            <person name="Nagiec M.J."/>
            <person name="Sumby P."/>
            <person name="Porcella S.F."/>
            <person name="DeLeo F.R."/>
            <person name="Musser J.M."/>
        </authorList>
    </citation>
    <scope>NUCLEOTIDE SEQUENCE [LARGE SCALE GENOMIC DNA]</scope>
    <source>
        <strain>MGAS9429</strain>
    </source>
</reference>
<proteinExistence type="inferred from homology"/>
<feature type="chain" id="PRO_0000289441" description="Lipoprotein signal peptidase">
    <location>
        <begin position="1"/>
        <end position="152"/>
    </location>
</feature>
<feature type="transmembrane region" description="Helical" evidence="1">
    <location>
        <begin position="5"/>
        <end position="25"/>
    </location>
</feature>
<feature type="transmembrane region" description="Helical" evidence="1">
    <location>
        <begin position="61"/>
        <end position="81"/>
    </location>
</feature>
<feature type="transmembrane region" description="Helical" evidence="1">
    <location>
        <begin position="84"/>
        <end position="104"/>
    </location>
</feature>
<feature type="transmembrane region" description="Helical" evidence="1">
    <location>
        <begin position="125"/>
        <end position="145"/>
    </location>
</feature>
<feature type="active site" evidence="1">
    <location>
        <position position="114"/>
    </location>
</feature>
<feature type="active site" evidence="1">
    <location>
        <position position="130"/>
    </location>
</feature>
<comment type="function">
    <text evidence="1">This protein specifically catalyzes the removal of signal peptides from prolipoproteins.</text>
</comment>
<comment type="catalytic activity">
    <reaction evidence="1">
        <text>Release of signal peptides from bacterial membrane prolipoproteins. Hydrolyzes -Xaa-Yaa-Zaa-|-(S,diacylglyceryl)Cys-, in which Xaa is hydrophobic (preferably Leu), and Yaa (Ala or Ser) and Zaa (Gly or Ala) have small, neutral side chains.</text>
        <dbReference type="EC" id="3.4.23.36"/>
    </reaction>
</comment>
<comment type="pathway">
    <text evidence="1">Protein modification; lipoprotein biosynthesis (signal peptide cleavage).</text>
</comment>
<comment type="subcellular location">
    <subcellularLocation>
        <location evidence="1">Cell membrane</location>
        <topology evidence="1">Multi-pass membrane protein</topology>
    </subcellularLocation>
</comment>
<comment type="similarity">
    <text evidence="1">Belongs to the peptidase A8 family.</text>
</comment>
<accession>Q1JMD2</accession>
<protein>
    <recommendedName>
        <fullName evidence="1">Lipoprotein signal peptidase</fullName>
        <ecNumber evidence="1">3.4.23.36</ecNumber>
    </recommendedName>
    <alternativeName>
        <fullName evidence="1">Prolipoprotein signal peptidase</fullName>
    </alternativeName>
    <alternativeName>
        <fullName evidence="1">Signal peptidase II</fullName>
        <shortName evidence="1">SPase II</shortName>
    </alternativeName>
</protein>
<gene>
    <name evidence="1" type="primary">lspA</name>
    <name type="ordered locus">MGAS9429_Spy0692</name>
</gene>
<dbReference type="EC" id="3.4.23.36" evidence="1"/>
<dbReference type="EMBL" id="CP000259">
    <property type="protein sequence ID" value="ABF31880.1"/>
    <property type="molecule type" value="Genomic_DNA"/>
</dbReference>
<dbReference type="RefSeq" id="WP_002985097.1">
    <property type="nucleotide sequence ID" value="NC_008021.1"/>
</dbReference>
<dbReference type="SMR" id="Q1JMD2"/>
<dbReference type="GeneID" id="69901059"/>
<dbReference type="KEGG" id="spk:MGAS9429_Spy0692"/>
<dbReference type="HOGENOM" id="CLU_083252_3_3_9"/>
<dbReference type="UniPathway" id="UPA00665"/>
<dbReference type="Proteomes" id="UP000002433">
    <property type="component" value="Chromosome"/>
</dbReference>
<dbReference type="GO" id="GO:0005886">
    <property type="term" value="C:plasma membrane"/>
    <property type="evidence" value="ECO:0007669"/>
    <property type="project" value="UniProtKB-SubCell"/>
</dbReference>
<dbReference type="GO" id="GO:0004190">
    <property type="term" value="F:aspartic-type endopeptidase activity"/>
    <property type="evidence" value="ECO:0007669"/>
    <property type="project" value="UniProtKB-UniRule"/>
</dbReference>
<dbReference type="GO" id="GO:0006508">
    <property type="term" value="P:proteolysis"/>
    <property type="evidence" value="ECO:0007669"/>
    <property type="project" value="UniProtKB-KW"/>
</dbReference>
<dbReference type="HAMAP" id="MF_00161">
    <property type="entry name" value="LspA"/>
    <property type="match status" value="1"/>
</dbReference>
<dbReference type="InterPro" id="IPR001872">
    <property type="entry name" value="Peptidase_A8"/>
</dbReference>
<dbReference type="NCBIfam" id="TIGR00077">
    <property type="entry name" value="lspA"/>
    <property type="match status" value="1"/>
</dbReference>
<dbReference type="PANTHER" id="PTHR33695">
    <property type="entry name" value="LIPOPROTEIN SIGNAL PEPTIDASE"/>
    <property type="match status" value="1"/>
</dbReference>
<dbReference type="PANTHER" id="PTHR33695:SF1">
    <property type="entry name" value="LIPOPROTEIN SIGNAL PEPTIDASE"/>
    <property type="match status" value="1"/>
</dbReference>
<dbReference type="Pfam" id="PF01252">
    <property type="entry name" value="Peptidase_A8"/>
    <property type="match status" value="1"/>
</dbReference>
<dbReference type="PRINTS" id="PR00781">
    <property type="entry name" value="LIPOSIGPTASE"/>
</dbReference>
<dbReference type="PROSITE" id="PS00855">
    <property type="entry name" value="SPASE_II"/>
    <property type="match status" value="1"/>
</dbReference>
<organism>
    <name type="scientific">Streptococcus pyogenes serotype M12 (strain MGAS9429)</name>
    <dbReference type="NCBI Taxonomy" id="370551"/>
    <lineage>
        <taxon>Bacteria</taxon>
        <taxon>Bacillati</taxon>
        <taxon>Bacillota</taxon>
        <taxon>Bacilli</taxon>
        <taxon>Lactobacillales</taxon>
        <taxon>Streptococcaceae</taxon>
        <taxon>Streptococcus</taxon>
    </lineage>
</organism>
<name>LSPA_STRPC</name>